<keyword id="KW-1132">Decay of host mRNAs by virus</keyword>
<keyword id="KW-1262">Eukaryotic host gene expression shutoff by virus</keyword>
<keyword id="KW-1035">Host cytoplasm</keyword>
<keyword id="KW-1190">Host gene expression shutoff by virus</keyword>
<keyword id="KW-1192">Host mRNA suppression by virus</keyword>
<keyword id="KW-1048">Host nucleus</keyword>
<keyword id="KW-0945">Host-virus interaction</keyword>
<keyword id="KW-0688">Ribosomal frameshifting</keyword>
<comment type="function">
    <text evidence="1 4">Plays a major role in the shutoff of the host protein expression by cleaving mRNAs probably via an endonuclease activity. This host shutoff allows the virus to escape from the host antiviral response (By similarity). Hijacks host RNA splicing machinery to selectively target host RNAs containing introns for destruction. This may explain the preferential degradation of RNAs that have undergone co- or post-transcriptional processing (By similarity).</text>
</comment>
<comment type="subcellular location">
    <subcellularLocation>
        <location evidence="4">Host cytoplasm</location>
    </subcellularLocation>
    <subcellularLocation>
        <location evidence="4">Host nucleus</location>
    </subcellularLocation>
</comment>
<comment type="alternative products">
    <event type="ribosomal frameshifting"/>
    <isoform>
        <id>P0DJW0-1</id>
        <name>PA-X</name>
        <sequence type="displayed"/>
    </isoform>
    <isoform>
        <id>Q1K9E2-1</id>
        <name>PA</name>
        <sequence type="external"/>
    </isoform>
</comment>
<comment type="domain">
    <text evidence="1 4">The probable endonuclease active site in the N-terminus and the basic amino acid cluster in the C-terminus are important for the shutoff activity. The C-terminus acts as a nuclear localization signal (By similarity). The C-terminus is recruited to host protein complexes involved in nuclear Pol II RNA processing (By similarity).</text>
</comment>
<comment type="similarity">
    <text evidence="6">Belongs to the influenza viruses PA-X family.</text>
</comment>
<sequence length="252" mass="29391">MEDFVRQCFNPMIVELAEKAMKEYGEDLKIETNKFAAICTHLEICFMYSDFHFINEQGESIVVELDDPNALLKHRFEIIEGRDRTMAWTVVNSICNTTGAEKPKFLPDLYDYKENRFIEIGVTRREVHIYYLEKANKIKSENTHIHIFSFTGEEMATKADYTLDDESRARIKTRLFTIRQEMANRGLWDSFVSPKEAKKQLKKDLKSQELCAGLPTKVSRRTSPALRILEPMWMDSNRTAALRASFLKCPKK</sequence>
<feature type="chain" id="PRO_0000419423" description="Protein PA-X">
    <location>
        <begin position="1"/>
        <end position="252"/>
    </location>
</feature>
<feature type="active site" evidence="2">
    <location>
        <position position="80"/>
    </location>
</feature>
<feature type="active site" evidence="2">
    <location>
        <position position="108"/>
    </location>
</feature>
<feature type="site" description="Important for efficient shutoff activity" evidence="5">
    <location>
        <position position="28"/>
    </location>
</feature>
<feature type="site" description="Important for efficient shutoff activity" evidence="5">
    <location>
        <position position="65"/>
    </location>
</feature>
<feature type="site" description="Important for efficient shutoff activity and nuclear localization" evidence="4">
    <location>
        <position position="195"/>
    </location>
</feature>
<feature type="site" description="Important for efficient shutoff activity and nuclear localization" evidence="4">
    <location>
        <position position="198"/>
    </location>
</feature>
<feature type="site" description="Important for efficient shutoff activity and nuclear localization" evidence="4">
    <location>
        <position position="199"/>
    </location>
</feature>
<feature type="site" description="Important for efficient shutoff activity" evidence="3">
    <location>
        <position position="202"/>
    </location>
</feature>
<feature type="site" description="Important for efficient shutoff activity" evidence="3">
    <location>
        <position position="203"/>
    </location>
</feature>
<feature type="site" description="Important for efficient shutoff activity" evidence="3">
    <location>
        <position position="206"/>
    </location>
</feature>
<evidence type="ECO:0000250" key="1">
    <source>
        <dbReference type="UniProtKB" id="P0CK64"/>
    </source>
</evidence>
<evidence type="ECO:0000250" key="2">
    <source>
        <dbReference type="UniProtKB" id="P0CK68"/>
    </source>
</evidence>
<evidence type="ECO:0000250" key="3">
    <source>
        <dbReference type="UniProtKB" id="P0DJW8"/>
    </source>
</evidence>
<evidence type="ECO:0000250" key="4">
    <source>
        <dbReference type="UniProtKB" id="P0DXO5"/>
    </source>
</evidence>
<evidence type="ECO:0000250" key="5">
    <source>
        <dbReference type="UniProtKB" id="P0DXO6"/>
    </source>
</evidence>
<evidence type="ECO:0000305" key="6"/>
<dbReference type="EMBL" id="DQ508928">
    <property type="status" value="NOT_ANNOTATED_CDS"/>
    <property type="molecule type" value="Genomic_RNA"/>
</dbReference>
<dbReference type="SMR" id="P0DJW0"/>
<dbReference type="Proteomes" id="UP000153055">
    <property type="component" value="Genome"/>
</dbReference>
<dbReference type="GO" id="GO:0003723">
    <property type="term" value="F:RNA binding"/>
    <property type="evidence" value="ECO:0007669"/>
    <property type="project" value="InterPro"/>
</dbReference>
<dbReference type="GO" id="GO:0039694">
    <property type="term" value="P:viral RNA genome replication"/>
    <property type="evidence" value="ECO:0007669"/>
    <property type="project" value="InterPro"/>
</dbReference>
<dbReference type="GO" id="GO:0075523">
    <property type="term" value="P:viral translational frameshifting"/>
    <property type="evidence" value="ECO:0007669"/>
    <property type="project" value="UniProtKB-KW"/>
</dbReference>
<dbReference type="FunFam" id="3.40.91.90:FF:000001">
    <property type="entry name" value="Polymerase acidic protein"/>
    <property type="match status" value="1"/>
</dbReference>
<dbReference type="Gene3D" id="3.40.91.90">
    <property type="entry name" value="Influenza RNA-dependent RNA polymerase subunit PA, endonuclease domain"/>
    <property type="match status" value="1"/>
</dbReference>
<dbReference type="InterPro" id="IPR001009">
    <property type="entry name" value="PA/PA-X"/>
</dbReference>
<dbReference type="InterPro" id="IPR038372">
    <property type="entry name" value="PA/PA-X_sf"/>
</dbReference>
<dbReference type="Pfam" id="PF00603">
    <property type="entry name" value="Flu_PA"/>
    <property type="match status" value="1"/>
</dbReference>
<organism>
    <name type="scientific">Influenza A virus (strain A/Udorn/307/1972 H3N2)</name>
    <dbReference type="NCBI Taxonomy" id="381517"/>
    <lineage>
        <taxon>Viruses</taxon>
        <taxon>Riboviria</taxon>
        <taxon>Orthornavirae</taxon>
        <taxon>Negarnaviricota</taxon>
        <taxon>Polyploviricotina</taxon>
        <taxon>Insthoviricetes</taxon>
        <taxon>Articulavirales</taxon>
        <taxon>Orthomyxoviridae</taxon>
        <taxon>Alphainfluenzavirus</taxon>
        <taxon>Alphainfluenzavirus influenzae</taxon>
        <taxon>Influenza A virus</taxon>
    </lineage>
</organism>
<name>PAX_I72A2</name>
<protein>
    <recommendedName>
        <fullName>Protein PA-X</fullName>
    </recommendedName>
</protein>
<organismHost>
    <name type="scientific">Aves</name>
    <dbReference type="NCBI Taxonomy" id="8782"/>
</organismHost>
<organismHost>
    <name type="scientific">Cetacea</name>
    <name type="common">whales</name>
    <dbReference type="NCBI Taxonomy" id="9721"/>
</organismHost>
<organismHost>
    <name type="scientific">Homo sapiens</name>
    <name type="common">Human</name>
    <dbReference type="NCBI Taxonomy" id="9606"/>
</organismHost>
<organismHost>
    <name type="scientific">Phocidae</name>
    <name type="common">true seals</name>
    <dbReference type="NCBI Taxonomy" id="9709"/>
</organismHost>
<organismHost>
    <name type="scientific">Sus scrofa</name>
    <name type="common">Pig</name>
    <dbReference type="NCBI Taxonomy" id="9823"/>
</organismHost>
<gene>
    <name type="primary">PA</name>
</gene>
<reference key="1">
    <citation type="submission" date="2006-04" db="EMBL/GenBank/DDBJ databases">
        <title>Complete genome sequencing and analysis of selected influenza virus vaccine strains spanning six decades (1933-1999).</title>
        <authorList>
            <person name="Mbawuike I.N."/>
            <person name="Zhang Y."/>
            <person name="Yamada R.E."/>
            <person name="Nino D."/>
            <person name="Bui H.-H."/>
            <person name="Sette A."/>
            <person name="Couch R.B."/>
        </authorList>
    </citation>
    <scope>NUCLEOTIDE SEQUENCE [GENOMIC RNA]</scope>
</reference>
<accession>P0DJW0</accession>
<proteinExistence type="inferred from homology"/>